<proteinExistence type="inferred from homology"/>
<organism>
    <name type="scientific">Saccharolobus islandicus (strain Y.G.57.14 / Yellowstone #1)</name>
    <name type="common">Sulfolobus islandicus</name>
    <dbReference type="NCBI Taxonomy" id="439386"/>
    <lineage>
        <taxon>Archaea</taxon>
        <taxon>Thermoproteota</taxon>
        <taxon>Thermoprotei</taxon>
        <taxon>Sulfolobales</taxon>
        <taxon>Sulfolobaceae</taxon>
        <taxon>Saccharolobus</taxon>
    </lineage>
</organism>
<accession>C3N7M8</accession>
<sequence>MSNEVEQKKSIKTINDLPGISQTVINKLIEAGYSSLETLAVASPQDLSVAAGIPLSTAQKIIKEARDALDIRFKTALEVKKERMNVKKISTGSQALDGLLAGGIETRTMTEFFGEFGSGKTQLCHQLSVNVQLPPEKGGLSGKAVYIDTEGTFRWERIENMAKALGLDIDNVMNNIYYIRAINTDHQIAIVDDLQELVSKDPSIKLIVVDSVTSHFRAEYPGRENLAVRQQKLNKHLHQLTRLAEVYDIAVIITNQVMARPDMFYGDPTVAVGGHTLYHVPGIRIQLKKSRGNRRIARVVDAPHLPEGEVVFALTEEGIRDAEE</sequence>
<evidence type="ECO:0000255" key="1">
    <source>
        <dbReference type="HAMAP-Rule" id="MF_00348"/>
    </source>
</evidence>
<protein>
    <recommendedName>
        <fullName evidence="1">DNA repair and recombination protein RadA</fullName>
    </recommendedName>
</protein>
<dbReference type="EMBL" id="CP001403">
    <property type="protein sequence ID" value="ACP46222.1"/>
    <property type="molecule type" value="Genomic_DNA"/>
</dbReference>
<dbReference type="RefSeq" id="WP_012711863.1">
    <property type="nucleotide sequence ID" value="NC_012622.1"/>
</dbReference>
<dbReference type="SMR" id="C3N7M8"/>
<dbReference type="GeneID" id="84062203"/>
<dbReference type="KEGG" id="siy:YG5714_1966"/>
<dbReference type="HOGENOM" id="CLU_041732_0_0_2"/>
<dbReference type="Proteomes" id="UP000002308">
    <property type="component" value="Chromosome"/>
</dbReference>
<dbReference type="GO" id="GO:0005524">
    <property type="term" value="F:ATP binding"/>
    <property type="evidence" value="ECO:0007669"/>
    <property type="project" value="UniProtKB-UniRule"/>
</dbReference>
<dbReference type="GO" id="GO:0016887">
    <property type="term" value="F:ATP hydrolysis activity"/>
    <property type="evidence" value="ECO:0007669"/>
    <property type="project" value="InterPro"/>
</dbReference>
<dbReference type="GO" id="GO:0140664">
    <property type="term" value="F:ATP-dependent DNA damage sensor activity"/>
    <property type="evidence" value="ECO:0007669"/>
    <property type="project" value="InterPro"/>
</dbReference>
<dbReference type="GO" id="GO:0003684">
    <property type="term" value="F:damaged DNA binding"/>
    <property type="evidence" value="ECO:0007669"/>
    <property type="project" value="UniProtKB-UniRule"/>
</dbReference>
<dbReference type="GO" id="GO:0006310">
    <property type="term" value="P:DNA recombination"/>
    <property type="evidence" value="ECO:0007669"/>
    <property type="project" value="UniProtKB-UniRule"/>
</dbReference>
<dbReference type="GO" id="GO:0006281">
    <property type="term" value="P:DNA repair"/>
    <property type="evidence" value="ECO:0007669"/>
    <property type="project" value="UniProtKB-UniRule"/>
</dbReference>
<dbReference type="CDD" id="cd19515">
    <property type="entry name" value="archRadA"/>
    <property type="match status" value="1"/>
</dbReference>
<dbReference type="FunFam" id="3.40.50.300:FF:002052">
    <property type="entry name" value="DNA repair protein RAD51 homolog"/>
    <property type="match status" value="1"/>
</dbReference>
<dbReference type="Gene3D" id="1.10.150.20">
    <property type="entry name" value="5' to 3' exonuclease, C-terminal subdomain"/>
    <property type="match status" value="1"/>
</dbReference>
<dbReference type="Gene3D" id="3.40.50.300">
    <property type="entry name" value="P-loop containing nucleotide triphosphate hydrolases"/>
    <property type="match status" value="1"/>
</dbReference>
<dbReference type="HAMAP" id="MF_00348">
    <property type="entry name" value="RadA_arch"/>
    <property type="match status" value="1"/>
</dbReference>
<dbReference type="InterPro" id="IPR003593">
    <property type="entry name" value="AAA+_ATPase"/>
</dbReference>
<dbReference type="InterPro" id="IPR013632">
    <property type="entry name" value="DNA_recomb/repair_Rad51_C"/>
</dbReference>
<dbReference type="InterPro" id="IPR011938">
    <property type="entry name" value="DNA_recomb/repair_RadA"/>
</dbReference>
<dbReference type="InterPro" id="IPR016467">
    <property type="entry name" value="DNA_recomb/repair_RecA-like"/>
</dbReference>
<dbReference type="InterPro" id="IPR010995">
    <property type="entry name" value="DNA_repair_Rad51/TF_NusA_a-hlx"/>
</dbReference>
<dbReference type="InterPro" id="IPR027417">
    <property type="entry name" value="P-loop_NTPase"/>
</dbReference>
<dbReference type="InterPro" id="IPR020588">
    <property type="entry name" value="RecA_ATP-bd"/>
</dbReference>
<dbReference type="InterPro" id="IPR020587">
    <property type="entry name" value="RecA_monomer-monomer_interface"/>
</dbReference>
<dbReference type="NCBIfam" id="NF003301">
    <property type="entry name" value="PRK04301.1"/>
    <property type="match status" value="1"/>
</dbReference>
<dbReference type="NCBIfam" id="TIGR02236">
    <property type="entry name" value="recomb_radA"/>
    <property type="match status" value="1"/>
</dbReference>
<dbReference type="PANTHER" id="PTHR22942:SF30">
    <property type="entry name" value="MEIOTIC RECOMBINATION PROTEIN DMC1_LIM15 HOMOLOG"/>
    <property type="match status" value="1"/>
</dbReference>
<dbReference type="PANTHER" id="PTHR22942">
    <property type="entry name" value="RECA/RAD51/RADA DNA STRAND-PAIRING FAMILY MEMBER"/>
    <property type="match status" value="1"/>
</dbReference>
<dbReference type="Pfam" id="PF14520">
    <property type="entry name" value="HHH_5"/>
    <property type="match status" value="1"/>
</dbReference>
<dbReference type="Pfam" id="PF08423">
    <property type="entry name" value="Rad51"/>
    <property type="match status" value="1"/>
</dbReference>
<dbReference type="PIRSF" id="PIRSF005856">
    <property type="entry name" value="Rad51"/>
    <property type="match status" value="1"/>
</dbReference>
<dbReference type="SMART" id="SM00382">
    <property type="entry name" value="AAA"/>
    <property type="match status" value="1"/>
</dbReference>
<dbReference type="SUPFAM" id="SSF52540">
    <property type="entry name" value="P-loop containing nucleoside triphosphate hydrolases"/>
    <property type="match status" value="1"/>
</dbReference>
<dbReference type="SUPFAM" id="SSF47794">
    <property type="entry name" value="Rad51 N-terminal domain-like"/>
    <property type="match status" value="1"/>
</dbReference>
<dbReference type="PROSITE" id="PS50162">
    <property type="entry name" value="RECA_2"/>
    <property type="match status" value="1"/>
</dbReference>
<dbReference type="PROSITE" id="PS50163">
    <property type="entry name" value="RECA_3"/>
    <property type="match status" value="1"/>
</dbReference>
<reference key="1">
    <citation type="journal article" date="2009" name="Proc. Natl. Acad. Sci. U.S.A.">
        <title>Biogeography of the Sulfolobus islandicus pan-genome.</title>
        <authorList>
            <person name="Reno M.L."/>
            <person name="Held N.L."/>
            <person name="Fields C.J."/>
            <person name="Burke P.V."/>
            <person name="Whitaker R.J."/>
        </authorList>
    </citation>
    <scope>NUCLEOTIDE SEQUENCE [LARGE SCALE GENOMIC DNA]</scope>
    <source>
        <strain>Y.G.57.14 / Yellowstone #1</strain>
    </source>
</reference>
<gene>
    <name evidence="1" type="primary">radA</name>
    <name type="ordered locus">YG5714_1966</name>
</gene>
<name>RADA_SACI7</name>
<comment type="function">
    <text evidence="1">Involved in DNA repair and in homologous recombination. Binds and assemble on single-stranded DNA to form a nucleoprotein filament. Hydrolyzes ATP in a ssDNA-dependent manner and promotes DNA strand exchange between homologous DNA molecules.</text>
</comment>
<comment type="similarity">
    <text evidence="1">Belongs to the eukaryotic RecA-like protein family.</text>
</comment>
<feature type="chain" id="PRO_1000205330" description="DNA repair and recombination protein RadA">
    <location>
        <begin position="1"/>
        <end position="324"/>
    </location>
</feature>
<feature type="binding site" evidence="1">
    <location>
        <begin position="114"/>
        <end position="121"/>
    </location>
    <ligand>
        <name>ATP</name>
        <dbReference type="ChEBI" id="CHEBI:30616"/>
    </ligand>
</feature>
<keyword id="KW-0067">ATP-binding</keyword>
<keyword id="KW-0227">DNA damage</keyword>
<keyword id="KW-0233">DNA recombination</keyword>
<keyword id="KW-0238">DNA-binding</keyword>
<keyword id="KW-0547">Nucleotide-binding</keyword>